<reference key="1">
    <citation type="journal article" date="2005" name="Science">
        <title>The transcriptional landscape of the mammalian genome.</title>
        <authorList>
            <person name="Carninci P."/>
            <person name="Kasukawa T."/>
            <person name="Katayama S."/>
            <person name="Gough J."/>
            <person name="Frith M.C."/>
            <person name="Maeda N."/>
            <person name="Oyama R."/>
            <person name="Ravasi T."/>
            <person name="Lenhard B."/>
            <person name="Wells C."/>
            <person name="Kodzius R."/>
            <person name="Shimokawa K."/>
            <person name="Bajic V.B."/>
            <person name="Brenner S.E."/>
            <person name="Batalov S."/>
            <person name="Forrest A.R."/>
            <person name="Zavolan M."/>
            <person name="Davis M.J."/>
            <person name="Wilming L.G."/>
            <person name="Aidinis V."/>
            <person name="Allen J.E."/>
            <person name="Ambesi-Impiombato A."/>
            <person name="Apweiler R."/>
            <person name="Aturaliya R.N."/>
            <person name="Bailey T.L."/>
            <person name="Bansal M."/>
            <person name="Baxter L."/>
            <person name="Beisel K.W."/>
            <person name="Bersano T."/>
            <person name="Bono H."/>
            <person name="Chalk A.M."/>
            <person name="Chiu K.P."/>
            <person name="Choudhary V."/>
            <person name="Christoffels A."/>
            <person name="Clutterbuck D.R."/>
            <person name="Crowe M.L."/>
            <person name="Dalla E."/>
            <person name="Dalrymple B.P."/>
            <person name="de Bono B."/>
            <person name="Della Gatta G."/>
            <person name="di Bernardo D."/>
            <person name="Down T."/>
            <person name="Engstrom P."/>
            <person name="Fagiolini M."/>
            <person name="Faulkner G."/>
            <person name="Fletcher C.F."/>
            <person name="Fukushima T."/>
            <person name="Furuno M."/>
            <person name="Futaki S."/>
            <person name="Gariboldi M."/>
            <person name="Georgii-Hemming P."/>
            <person name="Gingeras T.R."/>
            <person name="Gojobori T."/>
            <person name="Green R.E."/>
            <person name="Gustincich S."/>
            <person name="Harbers M."/>
            <person name="Hayashi Y."/>
            <person name="Hensch T.K."/>
            <person name="Hirokawa N."/>
            <person name="Hill D."/>
            <person name="Huminiecki L."/>
            <person name="Iacono M."/>
            <person name="Ikeo K."/>
            <person name="Iwama A."/>
            <person name="Ishikawa T."/>
            <person name="Jakt M."/>
            <person name="Kanapin A."/>
            <person name="Katoh M."/>
            <person name="Kawasawa Y."/>
            <person name="Kelso J."/>
            <person name="Kitamura H."/>
            <person name="Kitano H."/>
            <person name="Kollias G."/>
            <person name="Krishnan S.P."/>
            <person name="Kruger A."/>
            <person name="Kummerfeld S.K."/>
            <person name="Kurochkin I.V."/>
            <person name="Lareau L.F."/>
            <person name="Lazarevic D."/>
            <person name="Lipovich L."/>
            <person name="Liu J."/>
            <person name="Liuni S."/>
            <person name="McWilliam S."/>
            <person name="Madan Babu M."/>
            <person name="Madera M."/>
            <person name="Marchionni L."/>
            <person name="Matsuda H."/>
            <person name="Matsuzawa S."/>
            <person name="Miki H."/>
            <person name="Mignone F."/>
            <person name="Miyake S."/>
            <person name="Morris K."/>
            <person name="Mottagui-Tabar S."/>
            <person name="Mulder N."/>
            <person name="Nakano N."/>
            <person name="Nakauchi H."/>
            <person name="Ng P."/>
            <person name="Nilsson R."/>
            <person name="Nishiguchi S."/>
            <person name="Nishikawa S."/>
            <person name="Nori F."/>
            <person name="Ohara O."/>
            <person name="Okazaki Y."/>
            <person name="Orlando V."/>
            <person name="Pang K.C."/>
            <person name="Pavan W.J."/>
            <person name="Pavesi G."/>
            <person name="Pesole G."/>
            <person name="Petrovsky N."/>
            <person name="Piazza S."/>
            <person name="Reed J."/>
            <person name="Reid J.F."/>
            <person name="Ring B.Z."/>
            <person name="Ringwald M."/>
            <person name="Rost B."/>
            <person name="Ruan Y."/>
            <person name="Salzberg S.L."/>
            <person name="Sandelin A."/>
            <person name="Schneider C."/>
            <person name="Schoenbach C."/>
            <person name="Sekiguchi K."/>
            <person name="Semple C.A."/>
            <person name="Seno S."/>
            <person name="Sessa L."/>
            <person name="Sheng Y."/>
            <person name="Shibata Y."/>
            <person name="Shimada H."/>
            <person name="Shimada K."/>
            <person name="Silva D."/>
            <person name="Sinclair B."/>
            <person name="Sperling S."/>
            <person name="Stupka E."/>
            <person name="Sugiura K."/>
            <person name="Sultana R."/>
            <person name="Takenaka Y."/>
            <person name="Taki K."/>
            <person name="Tammoja K."/>
            <person name="Tan S.L."/>
            <person name="Tang S."/>
            <person name="Taylor M.S."/>
            <person name="Tegner J."/>
            <person name="Teichmann S.A."/>
            <person name="Ueda H.R."/>
            <person name="van Nimwegen E."/>
            <person name="Verardo R."/>
            <person name="Wei C.L."/>
            <person name="Yagi K."/>
            <person name="Yamanishi H."/>
            <person name="Zabarovsky E."/>
            <person name="Zhu S."/>
            <person name="Zimmer A."/>
            <person name="Hide W."/>
            <person name="Bult C."/>
            <person name="Grimmond S.M."/>
            <person name="Teasdale R.D."/>
            <person name="Liu E.T."/>
            <person name="Brusic V."/>
            <person name="Quackenbush J."/>
            <person name="Wahlestedt C."/>
            <person name="Mattick J.S."/>
            <person name="Hume D.A."/>
            <person name="Kai C."/>
            <person name="Sasaki D."/>
            <person name="Tomaru Y."/>
            <person name="Fukuda S."/>
            <person name="Kanamori-Katayama M."/>
            <person name="Suzuki M."/>
            <person name="Aoki J."/>
            <person name="Arakawa T."/>
            <person name="Iida J."/>
            <person name="Imamura K."/>
            <person name="Itoh M."/>
            <person name="Kato T."/>
            <person name="Kawaji H."/>
            <person name="Kawagashira N."/>
            <person name="Kawashima T."/>
            <person name="Kojima M."/>
            <person name="Kondo S."/>
            <person name="Konno H."/>
            <person name="Nakano K."/>
            <person name="Ninomiya N."/>
            <person name="Nishio T."/>
            <person name="Okada M."/>
            <person name="Plessy C."/>
            <person name="Shibata K."/>
            <person name="Shiraki T."/>
            <person name="Suzuki S."/>
            <person name="Tagami M."/>
            <person name="Waki K."/>
            <person name="Watahiki A."/>
            <person name="Okamura-Oho Y."/>
            <person name="Suzuki H."/>
            <person name="Kawai J."/>
            <person name="Hayashizaki Y."/>
        </authorList>
    </citation>
    <scope>NUCLEOTIDE SEQUENCE [LARGE SCALE MRNA]</scope>
    <source>
        <strain>C57BL/6J</strain>
        <tissue>Spinal ganglion</tissue>
        <tissue>Sympathetic ganglion</tissue>
    </source>
</reference>
<reference key="2">
    <citation type="journal article" date="2009" name="PLoS Biol.">
        <title>Lineage-specific biology revealed by a finished genome assembly of the mouse.</title>
        <authorList>
            <person name="Church D.M."/>
            <person name="Goodstadt L."/>
            <person name="Hillier L.W."/>
            <person name="Zody M.C."/>
            <person name="Goldstein S."/>
            <person name="She X."/>
            <person name="Bult C.J."/>
            <person name="Agarwala R."/>
            <person name="Cherry J.L."/>
            <person name="DiCuccio M."/>
            <person name="Hlavina W."/>
            <person name="Kapustin Y."/>
            <person name="Meric P."/>
            <person name="Maglott D."/>
            <person name="Birtle Z."/>
            <person name="Marques A.C."/>
            <person name="Graves T."/>
            <person name="Zhou S."/>
            <person name="Teague B."/>
            <person name="Potamousis K."/>
            <person name="Churas C."/>
            <person name="Place M."/>
            <person name="Herschleb J."/>
            <person name="Runnheim R."/>
            <person name="Forrest D."/>
            <person name="Amos-Landgraf J."/>
            <person name="Schwartz D.C."/>
            <person name="Cheng Z."/>
            <person name="Lindblad-Toh K."/>
            <person name="Eichler E.E."/>
            <person name="Ponting C.P."/>
        </authorList>
    </citation>
    <scope>NUCLEOTIDE SEQUENCE [LARGE SCALE GENOMIC DNA]</scope>
    <source>
        <strain>C57BL/6J</strain>
    </source>
</reference>
<reference key="3">
    <citation type="journal article" date="2004" name="Genome Res.">
        <title>The status, quality, and expansion of the NIH full-length cDNA project: the Mammalian Gene Collection (MGC).</title>
        <authorList>
            <consortium name="The MGC Project Team"/>
        </authorList>
    </citation>
    <scope>NUCLEOTIDE SEQUENCE [LARGE SCALE MRNA]</scope>
    <source>
        <tissue>Limb</tissue>
    </source>
</reference>
<reference key="4">
    <citation type="journal article" date="2010" name="Cell">
        <title>A tissue-specific atlas of mouse protein phosphorylation and expression.</title>
        <authorList>
            <person name="Huttlin E.L."/>
            <person name="Jedrychowski M.P."/>
            <person name="Elias J.E."/>
            <person name="Goswami T."/>
            <person name="Rad R."/>
            <person name="Beausoleil S.A."/>
            <person name="Villen J."/>
            <person name="Haas W."/>
            <person name="Sowa M.E."/>
            <person name="Gygi S.P."/>
        </authorList>
    </citation>
    <scope>IDENTIFICATION BY MASS SPECTROMETRY [LARGE SCALE ANALYSIS]</scope>
    <source>
        <tissue>Spleen</tissue>
        <tissue>Testis</tissue>
    </source>
</reference>
<comment type="function">
    <text evidence="2">Core component of the CTLH E3 ubiquitin-protein ligase complex that selectively accepts ubiquitin from UBE2H and mediates ubiquitination and subsequent proteasomal degradation of the transcription factor HBP1. MAEA and RMND5A are both required for catalytic activity of the CTLH E3 ubiquitin-protein ligase complex. Catalytic activity of the complex is required for normal cell proliferation. The CTLH E3 ubiquitin-protein ligase complex is not required for the degradation of enzymes involved in gluconeogenesis, such as FBP1.</text>
</comment>
<comment type="catalytic activity">
    <reaction evidence="2">
        <text>S-ubiquitinyl-[E2 ubiquitin-conjugating enzyme]-L-cysteine + [acceptor protein]-L-lysine = [E2 ubiquitin-conjugating enzyme]-L-cysteine + N(6)-ubiquitinyl-[acceptor protein]-L-lysine.</text>
        <dbReference type="EC" id="2.3.2.27"/>
    </reaction>
</comment>
<comment type="subunit">
    <text evidence="2">Identified in the CTLH complex that contains GID4, RANBP9 and/or RANBP10, MKLN1, MAEA, RMND5A (or alternatively its paralog RMND5B), GID8, ARMC8, WDR26 and YPEL5. Within this complex, MAEA, RMND5A (or alternatively its paralog RMND5B), GID8, WDR26, and RANBP9 and/or RANBP10 form the catalytic core, while GID4, MKLN1, ARMC8 and YPEL5 have ancillary roles.</text>
</comment>
<comment type="subcellular location">
    <subcellularLocation>
        <location evidence="2">Nucleus</location>
        <location evidence="2">Nucleoplasm</location>
    </subcellularLocation>
    <subcellularLocation>
        <location evidence="2">Cytoplasm</location>
    </subcellularLocation>
</comment>
<comment type="sequence caution" evidence="6">
    <conflict type="erroneous initiation">
        <sequence resource="EMBL-CDS" id="BAE28619"/>
    </conflict>
    <text>Truncated N-terminus.</text>
</comment>
<feature type="chain" id="PRO_0000272649" description="E3 ubiquitin-protein ligase RMND5A">
    <location>
        <begin position="1"/>
        <end position="391"/>
    </location>
</feature>
<feature type="domain" description="LisH" evidence="4">
    <location>
        <begin position="114"/>
        <end position="146"/>
    </location>
</feature>
<feature type="domain" description="CTLH" evidence="3">
    <location>
        <begin position="153"/>
        <end position="210"/>
    </location>
</feature>
<feature type="zinc finger region" description="RING-Gid-type" evidence="5">
    <location>
        <begin position="336"/>
        <end position="377"/>
    </location>
</feature>
<feature type="modified residue" description="N-acetylmethionine" evidence="2">
    <location>
        <position position="1"/>
    </location>
</feature>
<feature type="sequence conflict" description="In Ref. 1; BAE37765." evidence="6" ref="1">
    <original>K</original>
    <variation>R</variation>
    <location>
        <position position="80"/>
    </location>
</feature>
<feature type="sequence conflict" description="In Ref. 3; AAH50876." evidence="6" ref="3">
    <original>P</original>
    <variation>S</variation>
    <location>
        <position position="378"/>
    </location>
</feature>
<keyword id="KW-0007">Acetylation</keyword>
<keyword id="KW-0963">Cytoplasm</keyword>
<keyword id="KW-0479">Metal-binding</keyword>
<keyword id="KW-0539">Nucleus</keyword>
<keyword id="KW-1185">Reference proteome</keyword>
<keyword id="KW-0808">Transferase</keyword>
<keyword id="KW-0833">Ubl conjugation pathway</keyword>
<keyword id="KW-0862">Zinc</keyword>
<keyword id="KW-0863">Zinc-finger</keyword>
<evidence type="ECO:0000250" key="1">
    <source>
        <dbReference type="UniProtKB" id="Q6GLP4"/>
    </source>
</evidence>
<evidence type="ECO:0000250" key="2">
    <source>
        <dbReference type="UniProtKB" id="Q9H871"/>
    </source>
</evidence>
<evidence type="ECO:0000255" key="3">
    <source>
        <dbReference type="PROSITE-ProRule" id="PRU00058"/>
    </source>
</evidence>
<evidence type="ECO:0000255" key="4">
    <source>
        <dbReference type="PROSITE-ProRule" id="PRU00126"/>
    </source>
</evidence>
<evidence type="ECO:0000255" key="5">
    <source>
        <dbReference type="PROSITE-ProRule" id="PRU01215"/>
    </source>
</evidence>
<evidence type="ECO:0000305" key="6"/>
<protein>
    <recommendedName>
        <fullName>E3 ubiquitin-protein ligase RMND5A</fullName>
        <ecNumber evidence="1">2.3.2.27</ecNumber>
    </recommendedName>
    <alternativeName>
        <fullName>Protein RMD5 homolog A</fullName>
    </alternativeName>
</protein>
<dbReference type="EC" id="2.3.2.27" evidence="1"/>
<dbReference type="EMBL" id="AK148556">
    <property type="protein sequence ID" value="BAE28619.1"/>
    <property type="status" value="ALT_INIT"/>
    <property type="molecule type" value="mRNA"/>
</dbReference>
<dbReference type="EMBL" id="AK164384">
    <property type="protein sequence ID" value="BAE37765.1"/>
    <property type="molecule type" value="mRNA"/>
</dbReference>
<dbReference type="EMBL" id="AC154001">
    <property type="status" value="NOT_ANNOTATED_CDS"/>
    <property type="molecule type" value="Genomic_DNA"/>
</dbReference>
<dbReference type="EMBL" id="AC160090">
    <property type="status" value="NOT_ANNOTATED_CDS"/>
    <property type="molecule type" value="Genomic_DNA"/>
</dbReference>
<dbReference type="EMBL" id="BC050876">
    <property type="protein sequence ID" value="AAH50876.1"/>
    <property type="molecule type" value="mRNA"/>
</dbReference>
<dbReference type="CCDS" id="CCDS20231.1"/>
<dbReference type="RefSeq" id="NP_001342674.1">
    <property type="nucleotide sequence ID" value="NM_001355745.2"/>
</dbReference>
<dbReference type="RefSeq" id="NP_077250.2">
    <property type="nucleotide sequence ID" value="NM_024288.3"/>
</dbReference>
<dbReference type="RefSeq" id="XP_006506602.1">
    <property type="nucleotide sequence ID" value="XM_006506539.2"/>
</dbReference>
<dbReference type="SMR" id="Q80YQ8"/>
<dbReference type="BioGRID" id="212873">
    <property type="interactions" value="4"/>
</dbReference>
<dbReference type="FunCoup" id="Q80YQ8">
    <property type="interactions" value="2157"/>
</dbReference>
<dbReference type="STRING" id="10090.ENSMUSP00000002292"/>
<dbReference type="iPTMnet" id="Q80YQ8"/>
<dbReference type="PhosphoSitePlus" id="Q80YQ8"/>
<dbReference type="SwissPalm" id="Q80YQ8"/>
<dbReference type="PaxDb" id="10090-ENSMUSP00000002292"/>
<dbReference type="PeptideAtlas" id="Q80YQ8"/>
<dbReference type="ProteomicsDB" id="300409"/>
<dbReference type="Pumba" id="Q80YQ8"/>
<dbReference type="Antibodypedia" id="32147">
    <property type="antibodies" value="211 antibodies from 21 providers"/>
</dbReference>
<dbReference type="DNASU" id="68477"/>
<dbReference type="Ensembl" id="ENSMUST00000002292.15">
    <property type="protein sequence ID" value="ENSMUSP00000002292.9"/>
    <property type="gene ID" value="ENSMUSG00000002222.15"/>
</dbReference>
<dbReference type="GeneID" id="68477"/>
<dbReference type="KEGG" id="mmu:68477"/>
<dbReference type="UCSC" id="uc009cgt.2">
    <property type="organism name" value="mouse"/>
</dbReference>
<dbReference type="AGR" id="MGI:1915727"/>
<dbReference type="CTD" id="64795"/>
<dbReference type="MGI" id="MGI:1915727">
    <property type="gene designation" value="Rmnd5a"/>
</dbReference>
<dbReference type="VEuPathDB" id="HostDB:ENSMUSG00000002222"/>
<dbReference type="eggNOG" id="KOG2817">
    <property type="taxonomic scope" value="Eukaryota"/>
</dbReference>
<dbReference type="GeneTree" id="ENSGT00940000153203"/>
<dbReference type="HOGENOM" id="CLU_020227_3_1_1"/>
<dbReference type="InParanoid" id="Q80YQ8"/>
<dbReference type="OMA" id="LIRECKM"/>
<dbReference type="OrthoDB" id="1933281at2759"/>
<dbReference type="PhylomeDB" id="Q80YQ8"/>
<dbReference type="TreeFam" id="TF315176"/>
<dbReference type="Reactome" id="R-MMU-9861718">
    <property type="pathway name" value="Regulation of pyruvate metabolism"/>
</dbReference>
<dbReference type="BioGRID-ORCS" id="68477">
    <property type="hits" value="1 hit in 77 CRISPR screens"/>
</dbReference>
<dbReference type="ChiTaRS" id="Rmnd5a">
    <property type="organism name" value="mouse"/>
</dbReference>
<dbReference type="PRO" id="PR:Q80YQ8"/>
<dbReference type="Proteomes" id="UP000000589">
    <property type="component" value="Chromosome 6"/>
</dbReference>
<dbReference type="RNAct" id="Q80YQ8">
    <property type="molecule type" value="protein"/>
</dbReference>
<dbReference type="Bgee" id="ENSMUSG00000002222">
    <property type="expression patterns" value="Expressed in thymus and 263 other cell types or tissues"/>
</dbReference>
<dbReference type="ExpressionAtlas" id="Q80YQ8">
    <property type="expression patterns" value="baseline and differential"/>
</dbReference>
<dbReference type="GO" id="GO:0005737">
    <property type="term" value="C:cytoplasm"/>
    <property type="evidence" value="ECO:0000250"/>
    <property type="project" value="UniProtKB"/>
</dbReference>
<dbReference type="GO" id="GO:0005654">
    <property type="term" value="C:nucleoplasm"/>
    <property type="evidence" value="ECO:0007669"/>
    <property type="project" value="UniProtKB-SubCell"/>
</dbReference>
<dbReference type="GO" id="GO:0005634">
    <property type="term" value="C:nucleus"/>
    <property type="evidence" value="ECO:0000250"/>
    <property type="project" value="UniProtKB"/>
</dbReference>
<dbReference type="GO" id="GO:0000151">
    <property type="term" value="C:ubiquitin ligase complex"/>
    <property type="evidence" value="ECO:0000250"/>
    <property type="project" value="UniProtKB"/>
</dbReference>
<dbReference type="GO" id="GO:0061630">
    <property type="term" value="F:ubiquitin protein ligase activity"/>
    <property type="evidence" value="ECO:0007669"/>
    <property type="project" value="InterPro"/>
</dbReference>
<dbReference type="GO" id="GO:0004842">
    <property type="term" value="F:ubiquitin-protein transferase activity"/>
    <property type="evidence" value="ECO:0000250"/>
    <property type="project" value="UniProtKB"/>
</dbReference>
<dbReference type="GO" id="GO:0008270">
    <property type="term" value="F:zinc ion binding"/>
    <property type="evidence" value="ECO:0007669"/>
    <property type="project" value="UniProtKB-KW"/>
</dbReference>
<dbReference type="GO" id="GO:0043161">
    <property type="term" value="P:proteasome-mediated ubiquitin-dependent protein catabolic process"/>
    <property type="evidence" value="ECO:0007669"/>
    <property type="project" value="InterPro"/>
</dbReference>
<dbReference type="GO" id="GO:0000209">
    <property type="term" value="P:protein polyubiquitination"/>
    <property type="evidence" value="ECO:0000250"/>
    <property type="project" value="UniProtKB"/>
</dbReference>
<dbReference type="CDD" id="cd16794">
    <property type="entry name" value="dRING_RMD5A"/>
    <property type="match status" value="1"/>
</dbReference>
<dbReference type="FunFam" id="3.30.40.10:FF:000143">
    <property type="entry name" value="Regulator of gluconeogenesis Rmd5"/>
    <property type="match status" value="1"/>
</dbReference>
<dbReference type="InterPro" id="IPR013144">
    <property type="entry name" value="CRA_dom"/>
</dbReference>
<dbReference type="InterPro" id="IPR024964">
    <property type="entry name" value="CTLH/CRA"/>
</dbReference>
<dbReference type="InterPro" id="IPR006595">
    <property type="entry name" value="CTLH_C"/>
</dbReference>
<dbReference type="InterPro" id="IPR045098">
    <property type="entry name" value="Fyv10_fam"/>
</dbReference>
<dbReference type="InterPro" id="IPR006594">
    <property type="entry name" value="LisH"/>
</dbReference>
<dbReference type="InterPro" id="IPR037680">
    <property type="entry name" value="RMD5A_dRING"/>
</dbReference>
<dbReference type="InterPro" id="IPR044063">
    <property type="entry name" value="ZF_RING_GID"/>
</dbReference>
<dbReference type="InterPro" id="IPR027370">
    <property type="entry name" value="Znf-RING_euk"/>
</dbReference>
<dbReference type="PANTHER" id="PTHR12170:SF5">
    <property type="entry name" value="E3 UBIQUITIN-PROTEIN TRANSFERASE RMND5A"/>
    <property type="match status" value="1"/>
</dbReference>
<dbReference type="PANTHER" id="PTHR12170">
    <property type="entry name" value="MACROPHAGE ERYTHROBLAST ATTACHER-RELATED"/>
    <property type="match status" value="1"/>
</dbReference>
<dbReference type="Pfam" id="PF10607">
    <property type="entry name" value="CTLH"/>
    <property type="match status" value="1"/>
</dbReference>
<dbReference type="Pfam" id="PF13445">
    <property type="entry name" value="zf-RING_UBOX"/>
    <property type="match status" value="1"/>
</dbReference>
<dbReference type="SMART" id="SM00757">
    <property type="entry name" value="CRA"/>
    <property type="match status" value="1"/>
</dbReference>
<dbReference type="SMART" id="SM00668">
    <property type="entry name" value="CTLH"/>
    <property type="match status" value="1"/>
</dbReference>
<dbReference type="SMART" id="SM00667">
    <property type="entry name" value="LisH"/>
    <property type="match status" value="1"/>
</dbReference>
<dbReference type="SUPFAM" id="SSF57850">
    <property type="entry name" value="RING/U-box"/>
    <property type="match status" value="1"/>
</dbReference>
<dbReference type="PROSITE" id="PS50897">
    <property type="entry name" value="CTLH"/>
    <property type="match status" value="1"/>
</dbReference>
<dbReference type="PROSITE" id="PS50896">
    <property type="entry name" value="LISH"/>
    <property type="match status" value="1"/>
</dbReference>
<dbReference type="PROSITE" id="PS51867">
    <property type="entry name" value="ZF_RING_GID"/>
    <property type="match status" value="1"/>
</dbReference>
<gene>
    <name type="primary">Rmnd5a</name>
</gene>
<name>RMD5A_MOUSE</name>
<accession>Q80YQ8</accession>
<accession>E9QNK7</accession>
<accession>Q3TPH1</accession>
<accession>Q3UFE2</accession>
<organism>
    <name type="scientific">Mus musculus</name>
    <name type="common">Mouse</name>
    <dbReference type="NCBI Taxonomy" id="10090"/>
    <lineage>
        <taxon>Eukaryota</taxon>
        <taxon>Metazoa</taxon>
        <taxon>Chordata</taxon>
        <taxon>Craniata</taxon>
        <taxon>Vertebrata</taxon>
        <taxon>Euteleostomi</taxon>
        <taxon>Mammalia</taxon>
        <taxon>Eutheria</taxon>
        <taxon>Euarchontoglires</taxon>
        <taxon>Glires</taxon>
        <taxon>Rodentia</taxon>
        <taxon>Myomorpha</taxon>
        <taxon>Muroidea</taxon>
        <taxon>Muridae</taxon>
        <taxon>Murinae</taxon>
        <taxon>Mus</taxon>
        <taxon>Mus</taxon>
    </lineage>
</organism>
<sequence>MDQCVTVERELEKVLHKFSGYGQLCERGLEELIDYTGGLKHEILQSHGQDAELSGTLSLVLTQCCKRIKDTVQKLASDHKDIHSSVSRVGKAIDKNFDSDISSVGIDGCWQADSQRLLNEVMVEHFFRQGMLDVAEELCQESGLSVDPSQKEPFVELNRILEALKVRVLRPALEWAVSNREMLIAQNSSLEFKLHRLYFISLLMGGTTNQREALQYAKNFQPFALNHQKDIQVLMGSLVYLRQGIENSPYVHLLDANQWADICDIFTRDACALLGLSVESPLSVSFSAGCVALPALINIKAVIEQRQCTGVWNQKDELPIEVDLGKKCWYHSIFACPILRQQTTDNNPPMKLVCGHIISRDALNKMFNGSKLKCPYCPMEQSPGDAKQIFF</sequence>
<proteinExistence type="evidence at protein level"/>